<feature type="chain" id="PRO_0000290585" description="Carbamoyl phosphate synthase arginine-specific small chain">
    <location>
        <begin position="1"/>
        <end position="399"/>
    </location>
</feature>
<feature type="domain" description="Glutamine amidotransferase type-1" evidence="2">
    <location>
        <begin position="187"/>
        <end position="379"/>
    </location>
</feature>
<feature type="active site" description="Nucleophile" evidence="2">
    <location>
        <position position="267"/>
    </location>
</feature>
<feature type="active site" evidence="2">
    <location>
        <position position="352"/>
    </location>
</feature>
<feature type="active site" evidence="2">
    <location>
        <position position="354"/>
    </location>
</feature>
<accession>Q752N9</accession>
<evidence type="ECO:0000250" key="1">
    <source>
        <dbReference type="UniProtKB" id="P07258"/>
    </source>
</evidence>
<evidence type="ECO:0000255" key="2">
    <source>
        <dbReference type="PROSITE-ProRule" id="PRU00605"/>
    </source>
</evidence>
<evidence type="ECO:0000305" key="3"/>
<organism>
    <name type="scientific">Eremothecium gossypii (strain ATCC 10895 / CBS 109.51 / FGSC 9923 / NRRL Y-1056)</name>
    <name type="common">Yeast</name>
    <name type="synonym">Ashbya gossypii</name>
    <dbReference type="NCBI Taxonomy" id="284811"/>
    <lineage>
        <taxon>Eukaryota</taxon>
        <taxon>Fungi</taxon>
        <taxon>Dikarya</taxon>
        <taxon>Ascomycota</taxon>
        <taxon>Saccharomycotina</taxon>
        <taxon>Saccharomycetes</taxon>
        <taxon>Saccharomycetales</taxon>
        <taxon>Saccharomycetaceae</taxon>
        <taxon>Eremothecium</taxon>
    </lineage>
</organism>
<gene>
    <name type="primary">CPA1</name>
    <name type="ordered locus">AFR534W</name>
</gene>
<protein>
    <recommendedName>
        <fullName>Carbamoyl phosphate synthase arginine-specific small chain</fullName>
        <shortName>CPS</shortName>
        <shortName>CPSase</shortName>
        <ecNumber evidence="1">6.3.5.5</ecNumber>
    </recommendedName>
    <alternativeName>
        <fullName>Arginine-specific carbamoyl phosphate synthetase, glutamine chain</fullName>
    </alternativeName>
    <alternativeName>
        <fullName>Glutamine-dependent carbamoyl phosphate synthetase</fullName>
    </alternativeName>
</protein>
<sequence length="399" mass="43842">MTSDEAKKARFCLHGGPSYEGYSFGAPVSVGGEVVFTTSLVGYPDSMTDPSYKGQILVFTQPLIGNYGVPDGSVRDQYGLLKYMESSKVHVSAIVVAEYAWEYSHWTAVQSLGDWCRKEGVAAIGGIDTRAVVQYLRESGSTMGRVDVEGAAASARVVDPSKVNLVAQVSTKSPFYIPGKPSRVNYDVALVDCGVKENILRCLVVRGVNVTVFPYDYDVCSIAHHFDGVFISNGPGDPIHYRNSTVANLRRLLQDPDLQQVPIFGICMGHQLLALAAGASTVKMKYGNRAHNIPALDLSTGQCHITSQNHGYAVDAATLPRDEFVPLFVNLNDKSNEGIIHVSRPIYSTQFHPEGKGGPMDCSFLFDEYVERMRCYRKLFRQEPFIRFPVIGLPKARVL</sequence>
<comment type="function">
    <text evidence="1">Small subunit of the arginine-specific carbamoyl phosphate synthase (CPSase). CPSase catalyzes the formation of carbamoyl phosphate from the ammonia moiety of glutamine, carbonate, and phosphate donated by ATP, constituting the first step of 2 biosynthetic pathways, one leading to arginine and/or urea and the other to pyrimidine nucleotides. The small subunit (glutamine amidotransferase) binds and cleaves glutamine to supply the large subunit with the substrate ammonia.</text>
</comment>
<comment type="catalytic activity">
    <reaction evidence="1">
        <text>hydrogencarbonate + L-glutamine + 2 ATP + H2O = carbamoyl phosphate + L-glutamate + 2 ADP + phosphate + 2 H(+)</text>
        <dbReference type="Rhea" id="RHEA:18633"/>
        <dbReference type="ChEBI" id="CHEBI:15377"/>
        <dbReference type="ChEBI" id="CHEBI:15378"/>
        <dbReference type="ChEBI" id="CHEBI:17544"/>
        <dbReference type="ChEBI" id="CHEBI:29985"/>
        <dbReference type="ChEBI" id="CHEBI:30616"/>
        <dbReference type="ChEBI" id="CHEBI:43474"/>
        <dbReference type="ChEBI" id="CHEBI:58228"/>
        <dbReference type="ChEBI" id="CHEBI:58359"/>
        <dbReference type="ChEBI" id="CHEBI:456216"/>
        <dbReference type="EC" id="6.3.5.5"/>
    </reaction>
</comment>
<comment type="catalytic activity">
    <molecule>Carbamoyl phosphate synthase arginine-specific small chain</molecule>
    <reaction evidence="1">
        <text>L-glutamine + H2O = L-glutamate + NH4(+)</text>
        <dbReference type="Rhea" id="RHEA:15889"/>
        <dbReference type="ChEBI" id="CHEBI:15377"/>
        <dbReference type="ChEBI" id="CHEBI:28938"/>
        <dbReference type="ChEBI" id="CHEBI:29985"/>
        <dbReference type="ChEBI" id="CHEBI:58359"/>
    </reaction>
</comment>
<comment type="pathway">
    <text evidence="1">Amino-acid biosynthesis; L-arginine biosynthesis; carbamoyl phosphate from bicarbonate: step 1/1.</text>
</comment>
<comment type="subunit">
    <text evidence="1">Heterodimer composed of 2 chains; the small (or glutamine) chain promotes the hydrolysis of glutamine to ammonia, which is used by the large (or ammonia) chain to synthesize carbamoyl phosphate.</text>
</comment>
<comment type="subcellular location">
    <subcellularLocation>
        <location evidence="1">Cytoplasm</location>
    </subcellularLocation>
</comment>
<comment type="similarity">
    <text evidence="3">Belongs to the CarA family.</text>
</comment>
<name>CARA_EREGS</name>
<dbReference type="EC" id="6.3.5.5" evidence="1"/>
<dbReference type="EMBL" id="AE016819">
    <property type="protein sequence ID" value="AAS53905.1"/>
    <property type="molecule type" value="Genomic_DNA"/>
</dbReference>
<dbReference type="RefSeq" id="NP_986081.1">
    <property type="nucleotide sequence ID" value="NM_212217.1"/>
</dbReference>
<dbReference type="SMR" id="Q752N9"/>
<dbReference type="FunCoup" id="Q752N9">
    <property type="interactions" value="381"/>
</dbReference>
<dbReference type="STRING" id="284811.Q752N9"/>
<dbReference type="EnsemblFungi" id="AAS53905">
    <property type="protein sequence ID" value="AAS53905"/>
    <property type="gene ID" value="AGOS_AFR534W"/>
</dbReference>
<dbReference type="GeneID" id="4622360"/>
<dbReference type="KEGG" id="ago:AGOS_AFR534W"/>
<dbReference type="eggNOG" id="KOG0370">
    <property type="taxonomic scope" value="Eukaryota"/>
</dbReference>
<dbReference type="HOGENOM" id="CLU_035901_1_1_1"/>
<dbReference type="InParanoid" id="Q752N9"/>
<dbReference type="OMA" id="CFSVQYH"/>
<dbReference type="OrthoDB" id="434at2759"/>
<dbReference type="UniPathway" id="UPA00068">
    <property type="reaction ID" value="UER00171"/>
</dbReference>
<dbReference type="Proteomes" id="UP000000591">
    <property type="component" value="Chromosome VI"/>
</dbReference>
<dbReference type="GO" id="GO:0005951">
    <property type="term" value="C:carbamoyl-phosphate synthase complex"/>
    <property type="evidence" value="ECO:0000318"/>
    <property type="project" value="GO_Central"/>
</dbReference>
<dbReference type="GO" id="GO:0005737">
    <property type="term" value="C:cytoplasm"/>
    <property type="evidence" value="ECO:0000318"/>
    <property type="project" value="GO_Central"/>
</dbReference>
<dbReference type="GO" id="GO:0005524">
    <property type="term" value="F:ATP binding"/>
    <property type="evidence" value="ECO:0007669"/>
    <property type="project" value="UniProtKB-KW"/>
</dbReference>
<dbReference type="GO" id="GO:0004088">
    <property type="term" value="F:carbamoyl-phosphate synthase (glutamine-hydrolyzing) activity"/>
    <property type="evidence" value="ECO:0007669"/>
    <property type="project" value="UniProtKB-EC"/>
</dbReference>
<dbReference type="GO" id="GO:0004359">
    <property type="term" value="F:glutaminase activity"/>
    <property type="evidence" value="ECO:0007669"/>
    <property type="project" value="RHEA"/>
</dbReference>
<dbReference type="GO" id="GO:0006207">
    <property type="term" value="P:'de novo' pyrimidine nucleobase biosynthetic process"/>
    <property type="evidence" value="ECO:0007669"/>
    <property type="project" value="InterPro"/>
</dbReference>
<dbReference type="GO" id="GO:0006541">
    <property type="term" value="P:glutamine metabolic process"/>
    <property type="evidence" value="ECO:0007669"/>
    <property type="project" value="InterPro"/>
</dbReference>
<dbReference type="GO" id="GO:0006526">
    <property type="term" value="P:L-arginine biosynthetic process"/>
    <property type="evidence" value="ECO:0000318"/>
    <property type="project" value="GO_Central"/>
</dbReference>
<dbReference type="GO" id="GO:0006221">
    <property type="term" value="P:pyrimidine nucleotide biosynthetic process"/>
    <property type="evidence" value="ECO:0007669"/>
    <property type="project" value="EnsemblFungi"/>
</dbReference>
<dbReference type="CDD" id="cd01744">
    <property type="entry name" value="GATase1_CPSase"/>
    <property type="match status" value="1"/>
</dbReference>
<dbReference type="FunFam" id="3.40.50.880:FF:000016">
    <property type="entry name" value="Carbamoyl-phosphate synthase arginine-specific small chain"/>
    <property type="match status" value="1"/>
</dbReference>
<dbReference type="FunFam" id="3.50.30.20:FF:000003">
    <property type="entry name" value="Carbamoyl-phosphate synthase arginine-specific small chain"/>
    <property type="match status" value="1"/>
</dbReference>
<dbReference type="Gene3D" id="3.40.50.880">
    <property type="match status" value="1"/>
</dbReference>
<dbReference type="Gene3D" id="3.50.30.20">
    <property type="entry name" value="Carbamoyl-phosphate synthase small subunit, N-terminal domain"/>
    <property type="match status" value="1"/>
</dbReference>
<dbReference type="HAMAP" id="MF_01209">
    <property type="entry name" value="CPSase_S_chain"/>
    <property type="match status" value="1"/>
</dbReference>
<dbReference type="InterPro" id="IPR050472">
    <property type="entry name" value="Anth_synth/Amidotransfase"/>
</dbReference>
<dbReference type="InterPro" id="IPR006274">
    <property type="entry name" value="CarbamoylP_synth_ssu"/>
</dbReference>
<dbReference type="InterPro" id="IPR002474">
    <property type="entry name" value="CarbamoylP_synth_ssu_N"/>
</dbReference>
<dbReference type="InterPro" id="IPR036480">
    <property type="entry name" value="CarbP_synth_ssu_N_sf"/>
</dbReference>
<dbReference type="InterPro" id="IPR029062">
    <property type="entry name" value="Class_I_gatase-like"/>
</dbReference>
<dbReference type="InterPro" id="IPR035686">
    <property type="entry name" value="CPSase_GATase1"/>
</dbReference>
<dbReference type="InterPro" id="IPR017926">
    <property type="entry name" value="GATASE"/>
</dbReference>
<dbReference type="NCBIfam" id="TIGR01368">
    <property type="entry name" value="CPSaseIIsmall"/>
    <property type="match status" value="1"/>
</dbReference>
<dbReference type="NCBIfam" id="NF009475">
    <property type="entry name" value="PRK12838.1"/>
    <property type="match status" value="1"/>
</dbReference>
<dbReference type="PANTHER" id="PTHR43418:SF7">
    <property type="entry name" value="CARBAMOYL-PHOSPHATE SYNTHASE SMALL CHAIN"/>
    <property type="match status" value="1"/>
</dbReference>
<dbReference type="PANTHER" id="PTHR43418">
    <property type="entry name" value="MULTIFUNCTIONAL TRYPTOPHAN BIOSYNTHESIS PROTEIN-RELATED"/>
    <property type="match status" value="1"/>
</dbReference>
<dbReference type="Pfam" id="PF00988">
    <property type="entry name" value="CPSase_sm_chain"/>
    <property type="match status" value="1"/>
</dbReference>
<dbReference type="Pfam" id="PF00117">
    <property type="entry name" value="GATase"/>
    <property type="match status" value="1"/>
</dbReference>
<dbReference type="PRINTS" id="PR00099">
    <property type="entry name" value="CPSGATASE"/>
</dbReference>
<dbReference type="PRINTS" id="PR00096">
    <property type="entry name" value="GATASE"/>
</dbReference>
<dbReference type="SMART" id="SM01097">
    <property type="entry name" value="CPSase_sm_chain"/>
    <property type="match status" value="1"/>
</dbReference>
<dbReference type="SUPFAM" id="SSF52021">
    <property type="entry name" value="Carbamoyl phosphate synthetase, small subunit N-terminal domain"/>
    <property type="match status" value="1"/>
</dbReference>
<dbReference type="SUPFAM" id="SSF52317">
    <property type="entry name" value="Class I glutamine amidotransferase-like"/>
    <property type="match status" value="1"/>
</dbReference>
<dbReference type="PROSITE" id="PS51273">
    <property type="entry name" value="GATASE_TYPE_1"/>
    <property type="match status" value="1"/>
</dbReference>
<keyword id="KW-0028">Amino-acid biosynthesis</keyword>
<keyword id="KW-0055">Arginine biosynthesis</keyword>
<keyword id="KW-0067">ATP-binding</keyword>
<keyword id="KW-0963">Cytoplasm</keyword>
<keyword id="KW-0315">Glutamine amidotransferase</keyword>
<keyword id="KW-0436">Ligase</keyword>
<keyword id="KW-0547">Nucleotide-binding</keyword>
<keyword id="KW-1185">Reference proteome</keyword>
<reference key="1">
    <citation type="journal article" date="2004" name="Science">
        <title>The Ashbya gossypii genome as a tool for mapping the ancient Saccharomyces cerevisiae genome.</title>
        <authorList>
            <person name="Dietrich F.S."/>
            <person name="Voegeli S."/>
            <person name="Brachat S."/>
            <person name="Lerch A."/>
            <person name="Gates K."/>
            <person name="Steiner S."/>
            <person name="Mohr C."/>
            <person name="Poehlmann R."/>
            <person name="Luedi P."/>
            <person name="Choi S."/>
            <person name="Wing R.A."/>
            <person name="Flavier A."/>
            <person name="Gaffney T.D."/>
            <person name="Philippsen P."/>
        </authorList>
    </citation>
    <scope>NUCLEOTIDE SEQUENCE [LARGE SCALE GENOMIC DNA]</scope>
    <source>
        <strain>ATCC 10895 / CBS 109.51 / FGSC 9923 / NRRL Y-1056</strain>
    </source>
</reference>
<reference key="2">
    <citation type="journal article" date="2013" name="G3 (Bethesda)">
        <title>Genomes of Ashbya fungi isolated from insects reveal four mating-type loci, numerous translocations, lack of transposons, and distinct gene duplications.</title>
        <authorList>
            <person name="Dietrich F.S."/>
            <person name="Voegeli S."/>
            <person name="Kuo S."/>
            <person name="Philippsen P."/>
        </authorList>
    </citation>
    <scope>GENOME REANNOTATION</scope>
    <source>
        <strain>ATCC 10895 / CBS 109.51 / FGSC 9923 / NRRL Y-1056</strain>
    </source>
</reference>
<proteinExistence type="inferred from homology"/>